<keyword id="KW-0030">Aminoacyl-tRNA synthetase</keyword>
<keyword id="KW-0067">ATP-binding</keyword>
<keyword id="KW-0963">Cytoplasm</keyword>
<keyword id="KW-0436">Ligase</keyword>
<keyword id="KW-0547">Nucleotide-binding</keyword>
<keyword id="KW-0648">Protein biosynthesis</keyword>
<keyword id="KW-1185">Reference proteome</keyword>
<name>SYR_BRUC2</name>
<accession>A9MAQ0</accession>
<proteinExistence type="inferred from homology"/>
<gene>
    <name evidence="1" type="primary">argS</name>
    <name type="ordered locus">BCAN_A0891</name>
</gene>
<reference key="1">
    <citation type="submission" date="2007-10" db="EMBL/GenBank/DDBJ databases">
        <title>Brucella canis ATCC 23365 whole genome shotgun sequencing project.</title>
        <authorList>
            <person name="Setubal J.C."/>
            <person name="Bowns C."/>
            <person name="Boyle S."/>
            <person name="Crasta O.R."/>
            <person name="Czar M.J."/>
            <person name="Dharmanolla C."/>
            <person name="Gillespie J.J."/>
            <person name="Kenyon R.W."/>
            <person name="Lu J."/>
            <person name="Mane S."/>
            <person name="Mohapatra S."/>
            <person name="Nagrani S."/>
            <person name="Purkayastha A."/>
            <person name="Rajasimha H.K."/>
            <person name="Shallom J.M."/>
            <person name="Shallom S."/>
            <person name="Shukla M."/>
            <person name="Snyder E.E."/>
            <person name="Sobral B.W."/>
            <person name="Wattam A.R."/>
            <person name="Will R."/>
            <person name="Williams K."/>
            <person name="Yoo H."/>
            <person name="Bruce D."/>
            <person name="Detter C."/>
            <person name="Munk C."/>
            <person name="Brettin T.S."/>
        </authorList>
    </citation>
    <scope>NUCLEOTIDE SEQUENCE [LARGE SCALE GENOMIC DNA]</scope>
    <source>
        <strain>ATCC 23365 / NCTC 10854 / RM-666</strain>
    </source>
</reference>
<evidence type="ECO:0000255" key="1">
    <source>
        <dbReference type="HAMAP-Rule" id="MF_00123"/>
    </source>
</evidence>
<dbReference type="EC" id="6.1.1.19" evidence="1"/>
<dbReference type="EMBL" id="CP000872">
    <property type="protein sequence ID" value="ABX61953.1"/>
    <property type="molecule type" value="Genomic_DNA"/>
</dbReference>
<dbReference type="RefSeq" id="WP_004689634.1">
    <property type="nucleotide sequence ID" value="NC_010103.1"/>
</dbReference>
<dbReference type="SMR" id="A9MAQ0"/>
<dbReference type="GeneID" id="97533827"/>
<dbReference type="KEGG" id="bcs:BCAN_A0891"/>
<dbReference type="HOGENOM" id="CLU_006406_0_1_5"/>
<dbReference type="PhylomeDB" id="A9MAQ0"/>
<dbReference type="Proteomes" id="UP000001385">
    <property type="component" value="Chromosome I"/>
</dbReference>
<dbReference type="GO" id="GO:0005737">
    <property type="term" value="C:cytoplasm"/>
    <property type="evidence" value="ECO:0007669"/>
    <property type="project" value="UniProtKB-SubCell"/>
</dbReference>
<dbReference type="GO" id="GO:0004814">
    <property type="term" value="F:arginine-tRNA ligase activity"/>
    <property type="evidence" value="ECO:0007669"/>
    <property type="project" value="UniProtKB-UniRule"/>
</dbReference>
<dbReference type="GO" id="GO:0005524">
    <property type="term" value="F:ATP binding"/>
    <property type="evidence" value="ECO:0007669"/>
    <property type="project" value="UniProtKB-UniRule"/>
</dbReference>
<dbReference type="GO" id="GO:0006420">
    <property type="term" value="P:arginyl-tRNA aminoacylation"/>
    <property type="evidence" value="ECO:0007669"/>
    <property type="project" value="UniProtKB-UniRule"/>
</dbReference>
<dbReference type="CDD" id="cd00671">
    <property type="entry name" value="ArgRS_core"/>
    <property type="match status" value="1"/>
</dbReference>
<dbReference type="Gene3D" id="3.30.1360.70">
    <property type="entry name" value="Arginyl tRNA synthetase N-terminal domain"/>
    <property type="match status" value="1"/>
</dbReference>
<dbReference type="Gene3D" id="3.40.50.620">
    <property type="entry name" value="HUPs"/>
    <property type="match status" value="1"/>
</dbReference>
<dbReference type="Gene3D" id="1.10.730.10">
    <property type="entry name" value="Isoleucyl-tRNA Synthetase, Domain 1"/>
    <property type="match status" value="1"/>
</dbReference>
<dbReference type="HAMAP" id="MF_00123">
    <property type="entry name" value="Arg_tRNA_synth"/>
    <property type="match status" value="1"/>
</dbReference>
<dbReference type="InterPro" id="IPR001412">
    <property type="entry name" value="aa-tRNA-synth_I_CS"/>
</dbReference>
<dbReference type="InterPro" id="IPR001278">
    <property type="entry name" value="Arg-tRNA-ligase"/>
</dbReference>
<dbReference type="InterPro" id="IPR005148">
    <property type="entry name" value="Arg-tRNA-synth_N"/>
</dbReference>
<dbReference type="InterPro" id="IPR036695">
    <property type="entry name" value="Arg-tRNA-synth_N_sf"/>
</dbReference>
<dbReference type="InterPro" id="IPR035684">
    <property type="entry name" value="ArgRS_core"/>
</dbReference>
<dbReference type="InterPro" id="IPR008909">
    <property type="entry name" value="DALR_anticod-bd"/>
</dbReference>
<dbReference type="InterPro" id="IPR014729">
    <property type="entry name" value="Rossmann-like_a/b/a_fold"/>
</dbReference>
<dbReference type="InterPro" id="IPR009080">
    <property type="entry name" value="tRNAsynth_Ia_anticodon-bd"/>
</dbReference>
<dbReference type="NCBIfam" id="TIGR00456">
    <property type="entry name" value="argS"/>
    <property type="match status" value="1"/>
</dbReference>
<dbReference type="PANTHER" id="PTHR11956:SF5">
    <property type="entry name" value="ARGININE--TRNA LIGASE, CYTOPLASMIC"/>
    <property type="match status" value="1"/>
</dbReference>
<dbReference type="PANTHER" id="PTHR11956">
    <property type="entry name" value="ARGINYL-TRNA SYNTHETASE"/>
    <property type="match status" value="1"/>
</dbReference>
<dbReference type="Pfam" id="PF03485">
    <property type="entry name" value="Arg_tRNA_synt_N"/>
    <property type="match status" value="1"/>
</dbReference>
<dbReference type="Pfam" id="PF05746">
    <property type="entry name" value="DALR_1"/>
    <property type="match status" value="1"/>
</dbReference>
<dbReference type="Pfam" id="PF00750">
    <property type="entry name" value="tRNA-synt_1d"/>
    <property type="match status" value="1"/>
</dbReference>
<dbReference type="PRINTS" id="PR01038">
    <property type="entry name" value="TRNASYNTHARG"/>
</dbReference>
<dbReference type="SMART" id="SM01016">
    <property type="entry name" value="Arg_tRNA_synt_N"/>
    <property type="match status" value="1"/>
</dbReference>
<dbReference type="SMART" id="SM00836">
    <property type="entry name" value="DALR_1"/>
    <property type="match status" value="1"/>
</dbReference>
<dbReference type="SUPFAM" id="SSF47323">
    <property type="entry name" value="Anticodon-binding domain of a subclass of class I aminoacyl-tRNA synthetases"/>
    <property type="match status" value="1"/>
</dbReference>
<dbReference type="SUPFAM" id="SSF55190">
    <property type="entry name" value="Arginyl-tRNA synthetase (ArgRS), N-terminal 'additional' domain"/>
    <property type="match status" value="1"/>
</dbReference>
<dbReference type="SUPFAM" id="SSF52374">
    <property type="entry name" value="Nucleotidylyl transferase"/>
    <property type="match status" value="1"/>
</dbReference>
<dbReference type="PROSITE" id="PS00178">
    <property type="entry name" value="AA_TRNA_LIGASE_I"/>
    <property type="match status" value="1"/>
</dbReference>
<protein>
    <recommendedName>
        <fullName evidence="1">Arginine--tRNA ligase</fullName>
        <ecNumber evidence="1">6.1.1.19</ecNumber>
    </recommendedName>
    <alternativeName>
        <fullName evidence="1">Arginyl-tRNA synthetase</fullName>
        <shortName evidence="1">ArgRS</shortName>
    </alternativeName>
</protein>
<comment type="catalytic activity">
    <reaction evidence="1">
        <text>tRNA(Arg) + L-arginine + ATP = L-arginyl-tRNA(Arg) + AMP + diphosphate</text>
        <dbReference type="Rhea" id="RHEA:20301"/>
        <dbReference type="Rhea" id="RHEA-COMP:9658"/>
        <dbReference type="Rhea" id="RHEA-COMP:9673"/>
        <dbReference type="ChEBI" id="CHEBI:30616"/>
        <dbReference type="ChEBI" id="CHEBI:32682"/>
        <dbReference type="ChEBI" id="CHEBI:33019"/>
        <dbReference type="ChEBI" id="CHEBI:78442"/>
        <dbReference type="ChEBI" id="CHEBI:78513"/>
        <dbReference type="ChEBI" id="CHEBI:456215"/>
        <dbReference type="EC" id="6.1.1.19"/>
    </reaction>
</comment>
<comment type="subunit">
    <text evidence="1">Monomer.</text>
</comment>
<comment type="subcellular location">
    <subcellularLocation>
        <location evidence="1">Cytoplasm</location>
    </subcellularLocation>
</comment>
<comment type="similarity">
    <text evidence="1">Belongs to the class-I aminoacyl-tRNA synthetase family.</text>
</comment>
<feature type="chain" id="PRO_1000076205" description="Arginine--tRNA ligase">
    <location>
        <begin position="1"/>
        <end position="585"/>
    </location>
</feature>
<feature type="short sequence motif" description="'HIGH' region">
    <location>
        <begin position="131"/>
        <end position="141"/>
    </location>
</feature>
<organism>
    <name type="scientific">Brucella canis (strain ATCC 23365 / NCTC 10854 / RM-666)</name>
    <dbReference type="NCBI Taxonomy" id="483179"/>
    <lineage>
        <taxon>Bacteria</taxon>
        <taxon>Pseudomonadati</taxon>
        <taxon>Pseudomonadota</taxon>
        <taxon>Alphaproteobacteria</taxon>
        <taxon>Hyphomicrobiales</taxon>
        <taxon>Brucellaceae</taxon>
        <taxon>Brucella/Ochrobactrum group</taxon>
        <taxon>Brucella</taxon>
    </lineage>
</organism>
<sequence>MNIFADFDARIKKTLQDIDLKPKDGGELDLSRIGVEPPRDASHGDIATNAAMVLSKAVGQNPRELAARIAEALKADEDVESVDVAGPGFINLRLKASYWQRELLVMLNEGTDFGRSRLGAGKKVNVEYVSANPTGPMHVGHCRGAVVGDVLANLLKFAGYDVVKEYYINDAGAQIDVLARSVMLRYREALGESIGEIPAGLYPGDYLVRVGQELAGEFGTKLLEMPEAEALAIVKDRTIDAMMAMIRADLDALNVHHDVFYSERKLHVDHARAIRNAINDLTLKGHVYKGKLPPPKGQLPEDWEDREQTLFRSTEVGDDIDRPLMKSDGSFTYFAGDVAYFKDKYDRGFNEMIYVLGADHGGYVKRLEAVARAVSDGKAKLTVLLCQLVKLFRNGEPVRMSKRAGEFITLRDVVDEVGRDPVRFMMLYRKNDAPLDFDFAKVTEQSKDNPVFYVQYASARCHSVFRQAADQLGLVDLDRVAMGSHFEKLTDESEIALVRKLAEYPRLIESAAIHQEPHRLAFYLYDLASSFHSQWNRGTENPDLRFIKVNDPDLSLARLGLVQVVSDVLTSGLTIIGADAPTEMR</sequence>